<evidence type="ECO:0000255" key="1">
    <source>
        <dbReference type="HAMAP-Rule" id="MF_01661"/>
    </source>
</evidence>
<organism>
    <name type="scientific">Bacillus cereus (strain B4264)</name>
    <dbReference type="NCBI Taxonomy" id="405532"/>
    <lineage>
        <taxon>Bacteria</taxon>
        <taxon>Bacillati</taxon>
        <taxon>Bacillota</taxon>
        <taxon>Bacilli</taxon>
        <taxon>Bacillales</taxon>
        <taxon>Bacillaceae</taxon>
        <taxon>Bacillus</taxon>
        <taxon>Bacillus cereus group</taxon>
    </lineage>
</organism>
<keyword id="KW-0119">Carbohydrate metabolism</keyword>
<keyword id="KW-0963">Cytoplasm</keyword>
<keyword id="KW-0413">Isomerase</keyword>
<protein>
    <recommendedName>
        <fullName evidence="1">D-ribose pyranase</fullName>
        <ecNumber evidence="1">5.4.99.62</ecNumber>
    </recommendedName>
</protein>
<dbReference type="EC" id="5.4.99.62" evidence="1"/>
<dbReference type="EMBL" id="CP001176">
    <property type="protein sequence ID" value="ACK59148.1"/>
    <property type="molecule type" value="Genomic_DNA"/>
</dbReference>
<dbReference type="RefSeq" id="WP_000716136.1">
    <property type="nucleotide sequence ID" value="NC_011725.1"/>
</dbReference>
<dbReference type="SMR" id="B7HBU7"/>
<dbReference type="KEGG" id="bcb:BCB4264_A0698"/>
<dbReference type="HOGENOM" id="CLU_135498_0_0_9"/>
<dbReference type="UniPathway" id="UPA00916">
    <property type="reaction ID" value="UER00888"/>
</dbReference>
<dbReference type="Proteomes" id="UP000007096">
    <property type="component" value="Chromosome"/>
</dbReference>
<dbReference type="GO" id="GO:0005829">
    <property type="term" value="C:cytosol"/>
    <property type="evidence" value="ECO:0007669"/>
    <property type="project" value="TreeGrafter"/>
</dbReference>
<dbReference type="GO" id="GO:0062193">
    <property type="term" value="F:D-ribose pyranase activity"/>
    <property type="evidence" value="ECO:0007669"/>
    <property type="project" value="UniProtKB-EC"/>
</dbReference>
<dbReference type="GO" id="GO:0016872">
    <property type="term" value="F:intramolecular lyase activity"/>
    <property type="evidence" value="ECO:0007669"/>
    <property type="project" value="UniProtKB-UniRule"/>
</dbReference>
<dbReference type="GO" id="GO:0048029">
    <property type="term" value="F:monosaccharide binding"/>
    <property type="evidence" value="ECO:0007669"/>
    <property type="project" value="InterPro"/>
</dbReference>
<dbReference type="GO" id="GO:0019303">
    <property type="term" value="P:D-ribose catabolic process"/>
    <property type="evidence" value="ECO:0007669"/>
    <property type="project" value="UniProtKB-UniRule"/>
</dbReference>
<dbReference type="FunFam" id="3.40.1650.10:FF:000003">
    <property type="entry name" value="D-ribose pyranase"/>
    <property type="match status" value="1"/>
</dbReference>
<dbReference type="Gene3D" id="3.40.1650.10">
    <property type="entry name" value="RbsD-like domain"/>
    <property type="match status" value="1"/>
</dbReference>
<dbReference type="HAMAP" id="MF_01661">
    <property type="entry name" value="D_rib_pyranase"/>
    <property type="match status" value="1"/>
</dbReference>
<dbReference type="InterPro" id="IPR023064">
    <property type="entry name" value="D-ribose_pyranase"/>
</dbReference>
<dbReference type="InterPro" id="IPR023750">
    <property type="entry name" value="RbsD-like_sf"/>
</dbReference>
<dbReference type="InterPro" id="IPR007721">
    <property type="entry name" value="RbsD_FucU"/>
</dbReference>
<dbReference type="NCBIfam" id="NF008761">
    <property type="entry name" value="PRK11797.1"/>
    <property type="match status" value="1"/>
</dbReference>
<dbReference type="PANTHER" id="PTHR37831">
    <property type="entry name" value="D-RIBOSE PYRANASE"/>
    <property type="match status" value="1"/>
</dbReference>
<dbReference type="PANTHER" id="PTHR37831:SF1">
    <property type="entry name" value="D-RIBOSE PYRANASE"/>
    <property type="match status" value="1"/>
</dbReference>
<dbReference type="Pfam" id="PF05025">
    <property type="entry name" value="RbsD_FucU"/>
    <property type="match status" value="1"/>
</dbReference>
<dbReference type="SUPFAM" id="SSF102546">
    <property type="entry name" value="RbsD-like"/>
    <property type="match status" value="1"/>
</dbReference>
<name>RBSD_BACC4</name>
<reference key="1">
    <citation type="submission" date="2008-10" db="EMBL/GenBank/DDBJ databases">
        <title>Genome sequence of Bacillus cereus B4264.</title>
        <authorList>
            <person name="Dodson R.J."/>
            <person name="Durkin A.S."/>
            <person name="Rosovitz M.J."/>
            <person name="Rasko D.A."/>
            <person name="Hoffmaster A."/>
            <person name="Ravel J."/>
            <person name="Sutton G."/>
        </authorList>
    </citation>
    <scope>NUCLEOTIDE SEQUENCE [LARGE SCALE GENOMIC DNA]</scope>
    <source>
        <strain>B4264</strain>
    </source>
</reference>
<accession>B7HBU7</accession>
<gene>
    <name evidence="1" type="primary">rbsD</name>
    <name type="ordered locus">BCB4264_A0698</name>
</gene>
<comment type="function">
    <text evidence="1">Catalyzes the interconversion of beta-pyran and beta-furan forms of D-ribose.</text>
</comment>
<comment type="catalytic activity">
    <reaction evidence="1">
        <text>beta-D-ribopyranose = beta-D-ribofuranose</text>
        <dbReference type="Rhea" id="RHEA:25432"/>
        <dbReference type="ChEBI" id="CHEBI:27476"/>
        <dbReference type="ChEBI" id="CHEBI:47002"/>
        <dbReference type="EC" id="5.4.99.62"/>
    </reaction>
</comment>
<comment type="pathway">
    <text evidence="1">Carbohydrate metabolism; D-ribose degradation; D-ribose 5-phosphate from beta-D-ribopyranose: step 1/2.</text>
</comment>
<comment type="subunit">
    <text evidence="1">Homodecamer.</text>
</comment>
<comment type="subcellular location">
    <subcellularLocation>
        <location evidence="1">Cytoplasm</location>
    </subcellularLocation>
</comment>
<comment type="similarity">
    <text evidence="1">Belongs to the RbsD / FucU family. RbsD subfamily.</text>
</comment>
<feature type="chain" id="PRO_1000187133" description="D-ribose pyranase">
    <location>
        <begin position="1"/>
        <end position="131"/>
    </location>
</feature>
<feature type="active site" description="Proton donor" evidence="1">
    <location>
        <position position="20"/>
    </location>
</feature>
<feature type="binding site" evidence="1">
    <location>
        <position position="28"/>
    </location>
    <ligand>
        <name>substrate</name>
    </ligand>
</feature>
<feature type="binding site" evidence="1">
    <location>
        <position position="98"/>
    </location>
    <ligand>
        <name>substrate</name>
    </ligand>
</feature>
<feature type="binding site" evidence="1">
    <location>
        <begin position="120"/>
        <end position="122"/>
    </location>
    <ligand>
        <name>substrate</name>
    </ligand>
</feature>
<proteinExistence type="inferred from homology"/>
<sequence length="131" mass="14211">MKKHGVLNSEIAAVLASLGHTDTIVIADCGLPIPDGVKRIDLAVEIGKPSFLDVLQVVADDMAIEKVTLAEEVIINNAEVNKEIEQKLIEPAFEYVSHEQFKAHTKKAKAIIRTGEATPYANVILHAGVIF</sequence>